<proteinExistence type="evidence at transcript level"/>
<name>IL18_CAPHI</name>
<comment type="function">
    <text evidence="2">Pro-inflammatory cytokine primarily involved in epithelial barrier repair, polarized T-helper 1 (Th1) cell and natural killer (NK) cell immune responses. Upon binding to IL18R1 and IL18RAP, forms a signaling ternary complex which activates NF-kappa-B, triggering synthesis of inflammatory mediators. Synergizes with IL12/interleukin-12 to induce IFNG synthesis from T-helper 1 (Th1) cells and natural killer (NK) cells. Involved in transduction of inflammation downstream of pyroptosis: its mature form is specifically released in the extracellular milieu by passing through the gasdermin-D (GSDMD) pore.</text>
</comment>
<comment type="subunit">
    <text evidence="2">Forms a ternary complex with ligand-binding receptor subunit IL18R1 and signaling receptor subunit IL18RAP at the plasma membrane. Mature IL18 first binds to IL18R1 forming a low affinity binary complex, which then interacts with IL18RAP to form a high affinity ternary complex that signals inside the cell. Interacts with cargo receptor TMED10; the interaction mediates the translocation from the cytoplasm into the ERGIC (endoplasmic reticulum-Golgi intermediate compartment) and thereby secretion.</text>
</comment>
<comment type="subcellular location">
    <subcellularLocation>
        <location evidence="2">Cytoplasm</location>
        <location evidence="2">Cytosol</location>
    </subcellularLocation>
    <subcellularLocation>
        <location evidence="2">Secreted</location>
    </subcellularLocation>
    <text evidence="2">The precursor is cytosolic. In response to inflammasome-activating signals, cleaved and secreted. Mature form is secreted and released in the extracellular milieu by passing through the gasdermin-D (GSDMD) pore. In contrast, the precursor form is not released, due to the presence of an acidic region that is proteolytically removed by CASP1, CASP4 or CASP5 during maturation. The secretion is dependent on protein unfolding and facilitated by the cargo receptor TMED10.</text>
</comment>
<comment type="PTM">
    <text evidence="2">The pro-IL-18 precursor is processed by CASP1, CASP4 or CASP5 to yield its mature, active form. The pro-IL-18 precursor features autoinhibitory interactions between the propeptide and the post-cleavage-site region, preventing recognition by the IL18R1 receptor. Processing by CASP1, CASP4 or CASP5 induces conformational changes to generate critical receptor-binding sites. The mature form is then secreted and released in the extracellular milieu by passing through the gasdermin-D (GSDMD) pore. In contrast, cleavage by CASP3 inactivates IL18.</text>
</comment>
<comment type="similarity">
    <text evidence="3">Belongs to the IL-1 family.</text>
</comment>
<sequence length="192" mass="22023">MAAEPVEDNCISFVEMKFINNTLYFVAENGDLESDHFGKLEPKLSIIRNLNDQVLFISQGNQPVFEDMPDSDCSDNAPQTIFIIYMYKDSLTRGLAVTISVQCKKMSTLSCENKIISFKEMNPPDNIDNEGSDIIFFQRSVPGHDDKIQFESSLYKGYFLACKKENDLFKLILKRQDDNRDKSVMFTVQNQN</sequence>
<reference key="1">
    <citation type="journal article" date="2005" name="Int. J. Immunogenet.">
        <title>Molecular characterization and expression of caprine (Capra hircus) interleukin-18 cDNA.</title>
        <authorList>
            <person name="Hosamani M."/>
            <person name="Mondal B."/>
            <person name="Muneta Y."/>
            <person name="Rasool T.J."/>
        </authorList>
    </citation>
    <scope>NUCLEOTIDE SEQUENCE [MRNA]</scope>
</reference>
<accession>Q3ZT29</accession>
<gene>
    <name type="primary">IL18</name>
    <name type="synonym">IGIF</name>
</gene>
<protein>
    <recommendedName>
        <fullName>Interleukin-18</fullName>
        <shortName>IL-18</shortName>
    </recommendedName>
    <alternativeName>
        <fullName>Interferon gamma-inducing factor</fullName>
        <shortName>IFN-gamma-inducing factor</shortName>
    </alternativeName>
    <alternativeName>
        <fullName>Interleukin-1 gamma</fullName>
        <shortName>IL-1 gamma</shortName>
    </alternativeName>
</protein>
<evidence type="ECO:0000250" key="1">
    <source>
        <dbReference type="UniProtKB" id="P70380"/>
    </source>
</evidence>
<evidence type="ECO:0000250" key="2">
    <source>
        <dbReference type="UniProtKB" id="Q14116"/>
    </source>
</evidence>
<evidence type="ECO:0000305" key="3"/>
<feature type="propeptide" id="PRO_0000253476" evidence="1">
    <location>
        <begin position="1"/>
        <end position="35"/>
    </location>
</feature>
<feature type="chain" id="PRO_0000253477" description="Interleukin-18">
    <location>
        <begin position="36"/>
        <end position="192"/>
    </location>
</feature>
<feature type="site" description="Cleavage; by CASP1, CASP4 and CASP5" evidence="2">
    <location>
        <begin position="35"/>
        <end position="36"/>
    </location>
</feature>
<feature type="site" description="Cleavage; by CASP3" evidence="2">
    <location>
        <begin position="70"/>
        <end position="71"/>
    </location>
</feature>
<dbReference type="EMBL" id="AY605263">
    <property type="protein sequence ID" value="AAT99592.1"/>
    <property type="molecule type" value="mRNA"/>
</dbReference>
<dbReference type="RefSeq" id="NP_001272473.1">
    <property type="nucleotide sequence ID" value="NM_001285544.1"/>
</dbReference>
<dbReference type="SMR" id="Q3ZT29"/>
<dbReference type="STRING" id="9925.ENSCHIP00000023420"/>
<dbReference type="GeneID" id="100861190"/>
<dbReference type="KEGG" id="chx:100861190"/>
<dbReference type="CTD" id="3606"/>
<dbReference type="OrthoDB" id="8535973at2759"/>
<dbReference type="Proteomes" id="UP000291000">
    <property type="component" value="Unassembled WGS sequence"/>
</dbReference>
<dbReference type="Proteomes" id="UP000694566">
    <property type="component" value="Unplaced"/>
</dbReference>
<dbReference type="GO" id="GO:0005829">
    <property type="term" value="C:cytosol"/>
    <property type="evidence" value="ECO:0007669"/>
    <property type="project" value="UniProtKB-SubCell"/>
</dbReference>
<dbReference type="GO" id="GO:0005615">
    <property type="term" value="C:extracellular space"/>
    <property type="evidence" value="ECO:0007669"/>
    <property type="project" value="UniProtKB-KW"/>
</dbReference>
<dbReference type="GO" id="GO:0005125">
    <property type="term" value="F:cytokine activity"/>
    <property type="evidence" value="ECO:0000250"/>
    <property type="project" value="UniProtKB"/>
</dbReference>
<dbReference type="GO" id="GO:0045515">
    <property type="term" value="F:interleukin-18 receptor binding"/>
    <property type="evidence" value="ECO:0000250"/>
    <property type="project" value="UniProtKB"/>
</dbReference>
<dbReference type="GO" id="GO:0071222">
    <property type="term" value="P:cellular response to lipopolysaccharide"/>
    <property type="evidence" value="ECO:0007669"/>
    <property type="project" value="TreeGrafter"/>
</dbReference>
<dbReference type="GO" id="GO:0050830">
    <property type="term" value="P:defense response to Gram-positive bacterium"/>
    <property type="evidence" value="ECO:0000250"/>
    <property type="project" value="UniProtKB"/>
</dbReference>
<dbReference type="GO" id="GO:0061436">
    <property type="term" value="P:establishment of skin barrier"/>
    <property type="evidence" value="ECO:0000250"/>
    <property type="project" value="UniProtKB"/>
</dbReference>
<dbReference type="GO" id="GO:0006955">
    <property type="term" value="P:immune response"/>
    <property type="evidence" value="ECO:0007669"/>
    <property type="project" value="InterPro"/>
</dbReference>
<dbReference type="GO" id="GO:0006954">
    <property type="term" value="P:inflammatory response"/>
    <property type="evidence" value="ECO:0007669"/>
    <property type="project" value="UniProtKB-KW"/>
</dbReference>
<dbReference type="GO" id="GO:0035655">
    <property type="term" value="P:interleukin-18-mediated signaling pathway"/>
    <property type="evidence" value="ECO:0000250"/>
    <property type="project" value="UniProtKB"/>
</dbReference>
<dbReference type="GO" id="GO:0050729">
    <property type="term" value="P:positive regulation of inflammatory response"/>
    <property type="evidence" value="ECO:0000250"/>
    <property type="project" value="UniProtKB"/>
</dbReference>
<dbReference type="GO" id="GO:0051092">
    <property type="term" value="P:positive regulation of NF-kappaB transcription factor activity"/>
    <property type="evidence" value="ECO:0000250"/>
    <property type="project" value="UniProtKB"/>
</dbReference>
<dbReference type="GO" id="GO:2000556">
    <property type="term" value="P:positive regulation of T-helper 1 cell cytokine production"/>
    <property type="evidence" value="ECO:0000250"/>
    <property type="project" value="UniProtKB"/>
</dbReference>
<dbReference type="GO" id="GO:0032729">
    <property type="term" value="P:positive regulation of type II interferon production"/>
    <property type="evidence" value="ECO:0000250"/>
    <property type="project" value="UniProtKB"/>
</dbReference>
<dbReference type="CDD" id="cd23298">
    <property type="entry name" value="beta-trefoil_IL18"/>
    <property type="match status" value="1"/>
</dbReference>
<dbReference type="FunFam" id="2.80.10.50:FF:000043">
    <property type="entry name" value="Interleukin-18"/>
    <property type="match status" value="1"/>
</dbReference>
<dbReference type="Gene3D" id="2.80.10.50">
    <property type="match status" value="1"/>
</dbReference>
<dbReference type="InterPro" id="IPR015529">
    <property type="entry name" value="IL-18"/>
</dbReference>
<dbReference type="InterPro" id="IPR000975">
    <property type="entry name" value="IL-1_fam"/>
</dbReference>
<dbReference type="InterPro" id="IPR008996">
    <property type="entry name" value="IL1/FGF"/>
</dbReference>
<dbReference type="PANTHER" id="PTHR10078">
    <property type="entry name" value="INTERLEUKIN-1 FAMILY MEMBER"/>
    <property type="match status" value="1"/>
</dbReference>
<dbReference type="PANTHER" id="PTHR10078:SF35">
    <property type="entry name" value="INTERLEUKIN-18"/>
    <property type="match status" value="1"/>
</dbReference>
<dbReference type="Pfam" id="PF00340">
    <property type="entry name" value="IL1"/>
    <property type="match status" value="1"/>
</dbReference>
<dbReference type="PIRSF" id="PIRSF015162">
    <property type="entry name" value="Interleukin_18"/>
    <property type="match status" value="1"/>
</dbReference>
<dbReference type="PRINTS" id="PR01933">
    <property type="entry name" value="INTRLEUKIN18"/>
</dbReference>
<dbReference type="SUPFAM" id="SSF50353">
    <property type="entry name" value="Cytokine"/>
    <property type="match status" value="1"/>
</dbReference>
<keyword id="KW-0202">Cytokine</keyword>
<keyword id="KW-0963">Cytoplasm</keyword>
<keyword id="KW-0395">Inflammatory response</keyword>
<keyword id="KW-1185">Reference proteome</keyword>
<keyword id="KW-0964">Secreted</keyword>
<organism>
    <name type="scientific">Capra hircus</name>
    <name type="common">Goat</name>
    <dbReference type="NCBI Taxonomy" id="9925"/>
    <lineage>
        <taxon>Eukaryota</taxon>
        <taxon>Metazoa</taxon>
        <taxon>Chordata</taxon>
        <taxon>Craniata</taxon>
        <taxon>Vertebrata</taxon>
        <taxon>Euteleostomi</taxon>
        <taxon>Mammalia</taxon>
        <taxon>Eutheria</taxon>
        <taxon>Laurasiatheria</taxon>
        <taxon>Artiodactyla</taxon>
        <taxon>Ruminantia</taxon>
        <taxon>Pecora</taxon>
        <taxon>Bovidae</taxon>
        <taxon>Caprinae</taxon>
        <taxon>Capra</taxon>
    </lineage>
</organism>